<comment type="similarity">
    <text evidence="1">Belongs to the bacterial ribosomal protein bL35 family.</text>
</comment>
<gene>
    <name evidence="1" type="primary">rpmI</name>
    <name type="ordered locus">RL0267</name>
</gene>
<accession>Q1MMP5</accession>
<reference key="1">
    <citation type="journal article" date="2006" name="Genome Biol.">
        <title>The genome of Rhizobium leguminosarum has recognizable core and accessory components.</title>
        <authorList>
            <person name="Young J.P.W."/>
            <person name="Crossman L.C."/>
            <person name="Johnston A.W.B."/>
            <person name="Thomson N.R."/>
            <person name="Ghazoui Z.F."/>
            <person name="Hull K.H."/>
            <person name="Wexler M."/>
            <person name="Curson A.R.J."/>
            <person name="Todd J.D."/>
            <person name="Poole P.S."/>
            <person name="Mauchline T.H."/>
            <person name="East A.K."/>
            <person name="Quail M.A."/>
            <person name="Churcher C."/>
            <person name="Arrowsmith C."/>
            <person name="Cherevach I."/>
            <person name="Chillingworth T."/>
            <person name="Clarke K."/>
            <person name="Cronin A."/>
            <person name="Davis P."/>
            <person name="Fraser A."/>
            <person name="Hance Z."/>
            <person name="Hauser H."/>
            <person name="Jagels K."/>
            <person name="Moule S."/>
            <person name="Mungall K."/>
            <person name="Norbertczak H."/>
            <person name="Rabbinowitsch E."/>
            <person name="Sanders M."/>
            <person name="Simmonds M."/>
            <person name="Whitehead S."/>
            <person name="Parkhill J."/>
        </authorList>
    </citation>
    <scope>NUCLEOTIDE SEQUENCE [LARGE SCALE GENOMIC DNA]</scope>
    <source>
        <strain>DSM 114642 / LMG 32736 / 3841</strain>
    </source>
</reference>
<proteinExistence type="inferred from homology"/>
<feature type="chain" id="PRO_0000258735" description="Large ribosomal subunit protein bL35">
    <location>
        <begin position="1"/>
        <end position="67"/>
    </location>
</feature>
<protein>
    <recommendedName>
        <fullName evidence="1">Large ribosomal subunit protein bL35</fullName>
    </recommendedName>
    <alternativeName>
        <fullName evidence="2">50S ribosomal protein L35</fullName>
    </alternativeName>
</protein>
<name>RL35_RHIJ3</name>
<dbReference type="EMBL" id="AM236080">
    <property type="protein sequence ID" value="CAK05757.1"/>
    <property type="molecule type" value="Genomic_DNA"/>
</dbReference>
<dbReference type="RefSeq" id="WP_003544621.1">
    <property type="nucleotide sequence ID" value="NC_008380.1"/>
</dbReference>
<dbReference type="SMR" id="Q1MMP5"/>
<dbReference type="EnsemblBacteria" id="CAK05757">
    <property type="protein sequence ID" value="CAK05757"/>
    <property type="gene ID" value="RL0267"/>
</dbReference>
<dbReference type="GeneID" id="86850777"/>
<dbReference type="KEGG" id="rle:RL0267"/>
<dbReference type="eggNOG" id="COG0291">
    <property type="taxonomic scope" value="Bacteria"/>
</dbReference>
<dbReference type="HOGENOM" id="CLU_169643_2_1_5"/>
<dbReference type="Proteomes" id="UP000006575">
    <property type="component" value="Chromosome"/>
</dbReference>
<dbReference type="GO" id="GO:0022625">
    <property type="term" value="C:cytosolic large ribosomal subunit"/>
    <property type="evidence" value="ECO:0007669"/>
    <property type="project" value="TreeGrafter"/>
</dbReference>
<dbReference type="GO" id="GO:0003735">
    <property type="term" value="F:structural constituent of ribosome"/>
    <property type="evidence" value="ECO:0007669"/>
    <property type="project" value="InterPro"/>
</dbReference>
<dbReference type="GO" id="GO:0006412">
    <property type="term" value="P:translation"/>
    <property type="evidence" value="ECO:0007669"/>
    <property type="project" value="UniProtKB-UniRule"/>
</dbReference>
<dbReference type="FunFam" id="4.10.410.60:FF:000001">
    <property type="entry name" value="50S ribosomal protein L35"/>
    <property type="match status" value="1"/>
</dbReference>
<dbReference type="Gene3D" id="4.10.410.60">
    <property type="match status" value="1"/>
</dbReference>
<dbReference type="HAMAP" id="MF_00514">
    <property type="entry name" value="Ribosomal_bL35"/>
    <property type="match status" value="1"/>
</dbReference>
<dbReference type="InterPro" id="IPR001706">
    <property type="entry name" value="Ribosomal_bL35"/>
</dbReference>
<dbReference type="InterPro" id="IPR021137">
    <property type="entry name" value="Ribosomal_bL35-like"/>
</dbReference>
<dbReference type="InterPro" id="IPR018265">
    <property type="entry name" value="Ribosomal_bL35_CS"/>
</dbReference>
<dbReference type="InterPro" id="IPR037229">
    <property type="entry name" value="Ribosomal_bL35_sf"/>
</dbReference>
<dbReference type="NCBIfam" id="TIGR00001">
    <property type="entry name" value="rpmI_bact"/>
    <property type="match status" value="1"/>
</dbReference>
<dbReference type="PANTHER" id="PTHR33343">
    <property type="entry name" value="54S RIBOSOMAL PROTEIN BL35M"/>
    <property type="match status" value="1"/>
</dbReference>
<dbReference type="PANTHER" id="PTHR33343:SF1">
    <property type="entry name" value="LARGE RIBOSOMAL SUBUNIT PROTEIN BL35M"/>
    <property type="match status" value="1"/>
</dbReference>
<dbReference type="Pfam" id="PF01632">
    <property type="entry name" value="Ribosomal_L35p"/>
    <property type="match status" value="1"/>
</dbReference>
<dbReference type="PRINTS" id="PR00064">
    <property type="entry name" value="RIBOSOMALL35"/>
</dbReference>
<dbReference type="SUPFAM" id="SSF143034">
    <property type="entry name" value="L35p-like"/>
    <property type="match status" value="1"/>
</dbReference>
<dbReference type="PROSITE" id="PS00936">
    <property type="entry name" value="RIBOSOMAL_L35"/>
    <property type="match status" value="1"/>
</dbReference>
<keyword id="KW-0687">Ribonucleoprotein</keyword>
<keyword id="KW-0689">Ribosomal protein</keyword>
<evidence type="ECO:0000255" key="1">
    <source>
        <dbReference type="HAMAP-Rule" id="MF_00514"/>
    </source>
</evidence>
<evidence type="ECO:0000305" key="2"/>
<sequence length="67" mass="7400">MPKMKTKSSAKKRFKITATGKVKAAAAGKRHGMIKRSNKFIRDARGTMVLAEPDGRKVIKNYLPNGL</sequence>
<organism>
    <name type="scientific">Rhizobium johnstonii (strain DSM 114642 / LMG 32736 / 3841)</name>
    <name type="common">Rhizobium leguminosarum bv. viciae</name>
    <dbReference type="NCBI Taxonomy" id="216596"/>
    <lineage>
        <taxon>Bacteria</taxon>
        <taxon>Pseudomonadati</taxon>
        <taxon>Pseudomonadota</taxon>
        <taxon>Alphaproteobacteria</taxon>
        <taxon>Hyphomicrobiales</taxon>
        <taxon>Rhizobiaceae</taxon>
        <taxon>Rhizobium/Agrobacterium group</taxon>
        <taxon>Rhizobium</taxon>
        <taxon>Rhizobium johnstonii</taxon>
    </lineage>
</organism>